<evidence type="ECO:0000256" key="1">
    <source>
        <dbReference type="SAM" id="MobiDB-lite"/>
    </source>
</evidence>
<reference key="1">
    <citation type="journal article" date="2005" name="Nature">
        <title>Virology: independent virus development outside a host.</title>
        <authorList>
            <person name="Haring M."/>
            <person name="Vestergaard G."/>
            <person name="Rachel R."/>
            <person name="Chen L."/>
            <person name="Garrett R.A."/>
            <person name="Prangishvili D."/>
        </authorList>
    </citation>
    <scope>NUCLEOTIDE SEQUENCE [GENOMIC DNA]</scope>
</reference>
<accession>Q3V4S2</accession>
<keyword id="KW-1185">Reference proteome</keyword>
<proteinExistence type="predicted"/>
<sequence length="86" mass="10087">MLSNSTSRNRHSKHNKKNTREDFDGYYFNKNVVICDDKGQKITAKVYKTSKYWLMLKTSDGKTIFMNKAFIKSIELAEEEEKDDLA</sequence>
<dbReference type="EMBL" id="AJ888457">
    <property type="protein sequence ID" value="CAI59892.1"/>
    <property type="molecule type" value="Genomic_DNA"/>
</dbReference>
<dbReference type="RefSeq" id="YP_319855.1">
    <property type="nucleotide sequence ID" value="NC_007409.1"/>
</dbReference>
<dbReference type="SMR" id="Q3V4S2"/>
<dbReference type="GeneID" id="4484248"/>
<dbReference type="KEGG" id="vg:4484248"/>
<dbReference type="Proteomes" id="UP000002150">
    <property type="component" value="Genome"/>
</dbReference>
<organismHost>
    <name type="scientific">Acidianus convivator</name>
    <dbReference type="NCBI Taxonomy" id="269667"/>
</organismHost>
<protein>
    <recommendedName>
        <fullName>Uncharacterized protein ORF86</fullName>
    </recommendedName>
</protein>
<name>Y086_ATV</name>
<feature type="chain" id="PRO_0000389050" description="Uncharacterized protein ORF86">
    <location>
        <begin position="1"/>
        <end position="86"/>
    </location>
</feature>
<feature type="region of interest" description="Disordered" evidence="1">
    <location>
        <begin position="1"/>
        <end position="21"/>
    </location>
</feature>
<feature type="compositionally biased region" description="Basic residues" evidence="1">
    <location>
        <begin position="8"/>
        <end position="17"/>
    </location>
</feature>
<organism>
    <name type="scientific">Acidianus two-tailed virus</name>
    <name type="common">ATV</name>
    <dbReference type="NCBI Taxonomy" id="315953"/>
    <lineage>
        <taxon>Viruses</taxon>
        <taxon>Viruses incertae sedis</taxon>
        <taxon>Bicaudaviridae</taxon>
        <taxon>Bicaudavirus</taxon>
    </lineage>
</organism>